<protein>
    <recommendedName>
        <fullName>Protein UL40</fullName>
    </recommendedName>
</protein>
<comment type="function">
    <text evidence="1 2 3">Plays a role in the protection against host NK-cell cytotoxicity by up-regulating the cell surface expression of HLA-E independent of TAP (HLA-E has an inhibitory effect on the cytotoxic activity of the NK cell). Also promotes cell surface expression of UL18, another viral protein involved in NK-cell evasion.</text>
</comment>
<comment type="similarity">
    <text evidence="4">Belongs to the HHV-5 UL40 protein family.</text>
</comment>
<keyword id="KW-0002">3D-structure</keyword>
<keyword id="KW-0945">Host-virus interaction</keyword>
<keyword id="KW-1131">Modulation of host NK-cell activity by virus</keyword>
<keyword id="KW-1185">Reference proteome</keyword>
<keyword id="KW-0899">Viral immunoevasion</keyword>
<name>UL40_HCMVA</name>
<organismHost>
    <name type="scientific">Homo sapiens</name>
    <name type="common">Human</name>
    <dbReference type="NCBI Taxonomy" id="9606"/>
</organismHost>
<organism>
    <name type="scientific">Human cytomegalovirus (strain AD169)</name>
    <name type="common">HHV-5</name>
    <name type="synonym">Human herpesvirus 5</name>
    <dbReference type="NCBI Taxonomy" id="10360"/>
    <lineage>
        <taxon>Viruses</taxon>
        <taxon>Duplodnaviria</taxon>
        <taxon>Heunggongvirae</taxon>
        <taxon>Peploviricota</taxon>
        <taxon>Herviviricetes</taxon>
        <taxon>Herpesvirales</taxon>
        <taxon>Orthoherpesviridae</taxon>
        <taxon>Betaherpesvirinae</taxon>
        <taxon>Cytomegalovirus</taxon>
        <taxon>Cytomegalovirus humanbeta5</taxon>
        <taxon>Human cytomegalovirus</taxon>
    </lineage>
</organism>
<feature type="chain" id="PRO_0000115322" description="Protein UL40">
    <location>
        <begin position="1"/>
        <end position="221"/>
    </location>
</feature>
<feature type="region of interest" description="HLA-E-binding epitope">
    <location>
        <begin position="15"/>
        <end position="23"/>
    </location>
</feature>
<proteinExistence type="evidence at protein level"/>
<dbReference type="EMBL" id="X17403">
    <property type="protein sequence ID" value="CAA35399.1"/>
    <property type="molecule type" value="Genomic_DNA"/>
</dbReference>
<dbReference type="EMBL" id="BK000394">
    <property type="protein sequence ID" value="DAA00145.1"/>
    <property type="molecule type" value="Genomic_DNA"/>
</dbReference>
<dbReference type="PIR" id="S09803">
    <property type="entry name" value="S09803"/>
</dbReference>
<dbReference type="PDB" id="2ESV">
    <property type="method" value="X-ray"/>
    <property type="resolution" value="2.60 A"/>
    <property type="chains" value="P=15-23"/>
</dbReference>
<dbReference type="PDB" id="5W1V">
    <property type="method" value="X-ray"/>
    <property type="resolution" value="3.31 A"/>
    <property type="chains" value="C/H/M/R=15-23"/>
</dbReference>
<dbReference type="PDBsum" id="2ESV"/>
<dbReference type="PDBsum" id="5W1V"/>
<dbReference type="SMR" id="P16780"/>
<dbReference type="EvolutionaryTrace" id="P16780"/>
<dbReference type="Proteomes" id="UP000008991">
    <property type="component" value="Segment"/>
</dbReference>
<dbReference type="Proteomes" id="UP000008992">
    <property type="component" value="Segment"/>
</dbReference>
<dbReference type="GO" id="GO:0039672">
    <property type="term" value="P:symbiont-mediated suppression of host natural killer cell activation"/>
    <property type="evidence" value="ECO:0000314"/>
    <property type="project" value="UniProtKB"/>
</dbReference>
<dbReference type="InterPro" id="IPR019624">
    <property type="entry name" value="Herpes_UL40"/>
</dbReference>
<dbReference type="Pfam" id="PF10682">
    <property type="entry name" value="UL40"/>
    <property type="match status" value="1"/>
</dbReference>
<sequence length="221" mass="24367">MNKFSNTRIGFTCAVMAPRTLILTVGLLCMRIRSLLCSPAETTVTTAAVTSAHGPLCPLVFQGWAYAVYHQGDMALMTLDVYCCRQTSNNTVVAFSHHPADNTLLIEVGNNTRRHVDGISCQDHFRAQHQDCPAQTVHVRGVNESAFGLTHLQSCCLNEHSQLSERVAYHLKLRPATFGLETWAMYTVGILALGSFSSFYSQIARSLGVLPNDHHYALKKA</sequence>
<reference key="1">
    <citation type="journal article" date="1990" name="Curr. Top. Microbiol. Immunol.">
        <title>Analysis of the protein-coding content of the sequence of human cytomegalovirus strain AD169.</title>
        <authorList>
            <person name="Chee M.S."/>
            <person name="Bankier A.T."/>
            <person name="Beck S."/>
            <person name="Bohni R."/>
            <person name="Brown C.M."/>
            <person name="Cerny R."/>
            <person name="Horsnell T."/>
            <person name="Hutchison C.A. III"/>
            <person name="Kouzarides T."/>
            <person name="Martignetti J.A."/>
            <person name="Preddie E."/>
            <person name="Satchwell S.C."/>
            <person name="Tomlinson P."/>
            <person name="Weston K.M."/>
            <person name="Barrell B.G."/>
        </authorList>
    </citation>
    <scope>NUCLEOTIDE SEQUENCE [LARGE SCALE GENOMIC DNA]</scope>
</reference>
<reference key="2">
    <citation type="journal article" date="2003" name="J. Gen. Virol.">
        <title>The human cytomegalovirus genome revisited: comparison with the chimpanzee cytomegalovirus genome.</title>
        <authorList>
            <person name="Davison A.J."/>
            <person name="Dolan A."/>
            <person name="Akter P."/>
            <person name="Addison C."/>
            <person name="Dargan D.J."/>
            <person name="Alcendor D.J."/>
            <person name="McGeoch D.J."/>
            <person name="Hayward G.S."/>
        </authorList>
    </citation>
    <scope>GENOME REANNOTATION</scope>
</reference>
<reference key="3">
    <citation type="journal article" date="2003" name="J. Gen. Virol.">
        <authorList>
            <person name="Davison A.J."/>
            <person name="Dolan A."/>
            <person name="Akter P."/>
            <person name="Addison C."/>
            <person name="Dargan D.J."/>
            <person name="Alcendor D.J."/>
            <person name="McGeoch D.J."/>
            <person name="Hayward G.S."/>
        </authorList>
    </citation>
    <scope>ERRATUM OF PUBMED:12533697</scope>
</reference>
<reference key="4">
    <citation type="journal article" date="2000" name="J. Immunol.">
        <title>The human cytomegalovirus UL40 gene product contains a ligand for HLA-E and prevents NK cell-mediated lysis.</title>
        <authorList>
            <person name="Ulbrecht M."/>
            <person name="Martinozzi S."/>
            <person name="Grzeschik M."/>
            <person name="Hengel H."/>
            <person name="Ellwart J.W."/>
            <person name="Pla M."/>
            <person name="Weiss E.H."/>
        </authorList>
    </citation>
    <scope>REGION</scope>
    <scope>FUNCTION</scope>
</reference>
<reference key="5">
    <citation type="journal article" date="2000" name="Science">
        <title>Surface expression of HLA-E, an inhibitor of natural killer cells, enhanced by human cytomegalovirus gpUL40.</title>
        <authorList>
            <person name="Tomasec P."/>
            <person name="Braud V.M."/>
            <person name="Rickards C."/>
            <person name="Powell M.B."/>
            <person name="McSharry B.P."/>
            <person name="Gadola S."/>
            <person name="Cerundolo V."/>
            <person name="Borysiewicz L.K."/>
            <person name="McMichael A.J."/>
            <person name="Wilkinson G.W."/>
        </authorList>
    </citation>
    <scope>FUNCTION</scope>
</reference>
<reference key="6">
    <citation type="journal article" date="2012" name="J. Immunol.">
        <title>Human cytomegalovirus UL40 signal peptide regulates cell surface expression of the NK cell ligands HLA-E and gpUL18.</title>
        <authorList>
            <person name="Prod'homme V."/>
            <person name="Tomasec P."/>
            <person name="Cunningham C."/>
            <person name="Lemberg M.K."/>
            <person name="Stanton R.J."/>
            <person name="McSharry B.P."/>
            <person name="Wang E.C."/>
            <person name="Cuff S."/>
            <person name="Martoglio B."/>
            <person name="Davison A.J."/>
            <person name="Braud V.M."/>
            <person name="Wilkinson G.W."/>
        </authorList>
    </citation>
    <scope>FUNCTION</scope>
</reference>
<reference key="7">
    <citation type="journal article" date="2006" name="Nat. Immunol.">
        <title>Structural basis for a major histocompatibility complex class Ib-restricted T cell response.</title>
        <authorList>
            <person name="Hoare H.L."/>
            <person name="Sullivan L.C."/>
            <person name="Pietra G."/>
            <person name="Clements C.S."/>
            <person name="Lee E.J."/>
            <person name="Ely L.K."/>
            <person name="Beddoe T."/>
            <person name="Falco M."/>
            <person name="Kjer-Nielsen L."/>
            <person name="Reid H.H."/>
            <person name="McCluskey J."/>
            <person name="Moretta L."/>
            <person name="Rossjohn J."/>
            <person name="Brooks A.G."/>
        </authorList>
    </citation>
    <scope>X-RAY CRYSTALLOGRAPHY (2.6 ANGSTROMS) OF 15-23</scope>
</reference>
<evidence type="ECO:0000269" key="1">
    <source>
    </source>
</evidence>
<evidence type="ECO:0000269" key="2">
    <source>
    </source>
</evidence>
<evidence type="ECO:0000269" key="3">
    <source>
    </source>
</evidence>
<evidence type="ECO:0000305" key="4"/>
<gene>
    <name type="primary">UL40</name>
</gene>
<accession>P16780</accession>
<accession>Q7M6P3</accession>